<gene>
    <name evidence="1" type="primary">lpxD</name>
    <name type="ordered locus">Aave_1833</name>
</gene>
<proteinExistence type="inferred from homology"/>
<organism>
    <name type="scientific">Paracidovorax citrulli (strain AAC00-1)</name>
    <name type="common">Acidovorax citrulli</name>
    <dbReference type="NCBI Taxonomy" id="397945"/>
    <lineage>
        <taxon>Bacteria</taxon>
        <taxon>Pseudomonadati</taxon>
        <taxon>Pseudomonadota</taxon>
        <taxon>Betaproteobacteria</taxon>
        <taxon>Burkholderiales</taxon>
        <taxon>Comamonadaceae</taxon>
        <taxon>Paracidovorax</taxon>
    </lineage>
</organism>
<feature type="chain" id="PRO_1000050920" description="UDP-3-O-acylglucosamine N-acyltransferase">
    <location>
        <begin position="1"/>
        <end position="333"/>
    </location>
</feature>
<feature type="active site" description="Proton acceptor" evidence="1">
    <location>
        <position position="225"/>
    </location>
</feature>
<protein>
    <recommendedName>
        <fullName evidence="1">UDP-3-O-acylglucosamine N-acyltransferase</fullName>
        <ecNumber evidence="1">2.3.1.191</ecNumber>
    </recommendedName>
</protein>
<name>LPXD_PARC0</name>
<reference key="1">
    <citation type="submission" date="2006-12" db="EMBL/GenBank/DDBJ databases">
        <title>Complete sequence of Acidovorax avenae subsp. citrulli AAC00-1.</title>
        <authorList>
            <person name="Copeland A."/>
            <person name="Lucas S."/>
            <person name="Lapidus A."/>
            <person name="Barry K."/>
            <person name="Detter J.C."/>
            <person name="Glavina del Rio T."/>
            <person name="Dalin E."/>
            <person name="Tice H."/>
            <person name="Pitluck S."/>
            <person name="Kiss H."/>
            <person name="Brettin T."/>
            <person name="Bruce D."/>
            <person name="Han C."/>
            <person name="Tapia R."/>
            <person name="Gilna P."/>
            <person name="Schmutz J."/>
            <person name="Larimer F."/>
            <person name="Land M."/>
            <person name="Hauser L."/>
            <person name="Kyrpides N."/>
            <person name="Kim E."/>
            <person name="Stahl D."/>
            <person name="Richardson P."/>
        </authorList>
    </citation>
    <scope>NUCLEOTIDE SEQUENCE [LARGE SCALE GENOMIC DNA]</scope>
    <source>
        <strain>AAC00-1</strain>
    </source>
</reference>
<keyword id="KW-0012">Acyltransferase</keyword>
<keyword id="KW-0441">Lipid A biosynthesis</keyword>
<keyword id="KW-0444">Lipid biosynthesis</keyword>
<keyword id="KW-0443">Lipid metabolism</keyword>
<keyword id="KW-0677">Repeat</keyword>
<keyword id="KW-0808">Transferase</keyword>
<evidence type="ECO:0000255" key="1">
    <source>
        <dbReference type="HAMAP-Rule" id="MF_00523"/>
    </source>
</evidence>
<dbReference type="EC" id="2.3.1.191" evidence="1"/>
<dbReference type="EMBL" id="CP000512">
    <property type="protein sequence ID" value="ABM32417.1"/>
    <property type="molecule type" value="Genomic_DNA"/>
</dbReference>
<dbReference type="RefSeq" id="WP_011794963.1">
    <property type="nucleotide sequence ID" value="NC_008752.1"/>
</dbReference>
<dbReference type="SMR" id="A1TN79"/>
<dbReference type="STRING" id="397945.Aave_1833"/>
<dbReference type="GeneID" id="79793158"/>
<dbReference type="KEGG" id="aav:Aave_1833"/>
<dbReference type="eggNOG" id="COG1044">
    <property type="taxonomic scope" value="Bacteria"/>
</dbReference>
<dbReference type="HOGENOM" id="CLU_049865_0_1_4"/>
<dbReference type="OrthoDB" id="9784739at2"/>
<dbReference type="UniPathway" id="UPA00973"/>
<dbReference type="Proteomes" id="UP000002596">
    <property type="component" value="Chromosome"/>
</dbReference>
<dbReference type="GO" id="GO:0016020">
    <property type="term" value="C:membrane"/>
    <property type="evidence" value="ECO:0007669"/>
    <property type="project" value="GOC"/>
</dbReference>
<dbReference type="GO" id="GO:0016410">
    <property type="term" value="F:N-acyltransferase activity"/>
    <property type="evidence" value="ECO:0007669"/>
    <property type="project" value="InterPro"/>
</dbReference>
<dbReference type="GO" id="GO:0009245">
    <property type="term" value="P:lipid A biosynthetic process"/>
    <property type="evidence" value="ECO:0007669"/>
    <property type="project" value="UniProtKB-UniRule"/>
</dbReference>
<dbReference type="CDD" id="cd03352">
    <property type="entry name" value="LbH_LpxD"/>
    <property type="match status" value="1"/>
</dbReference>
<dbReference type="Gene3D" id="2.160.10.10">
    <property type="entry name" value="Hexapeptide repeat proteins"/>
    <property type="match status" value="1"/>
</dbReference>
<dbReference type="Gene3D" id="3.40.1390.10">
    <property type="entry name" value="MurE/MurF, N-terminal domain"/>
    <property type="match status" value="1"/>
</dbReference>
<dbReference type="HAMAP" id="MF_00523">
    <property type="entry name" value="LpxD"/>
    <property type="match status" value="1"/>
</dbReference>
<dbReference type="InterPro" id="IPR001451">
    <property type="entry name" value="Hexapep"/>
</dbReference>
<dbReference type="InterPro" id="IPR018357">
    <property type="entry name" value="Hexapep_transf_CS"/>
</dbReference>
<dbReference type="InterPro" id="IPR007691">
    <property type="entry name" value="LpxD"/>
</dbReference>
<dbReference type="InterPro" id="IPR011004">
    <property type="entry name" value="Trimer_LpxA-like_sf"/>
</dbReference>
<dbReference type="InterPro" id="IPR020573">
    <property type="entry name" value="UDP_GlcNAc_AcTrfase_non-rep"/>
</dbReference>
<dbReference type="NCBIfam" id="TIGR01853">
    <property type="entry name" value="lipid_A_lpxD"/>
    <property type="match status" value="1"/>
</dbReference>
<dbReference type="NCBIfam" id="NF002060">
    <property type="entry name" value="PRK00892.1"/>
    <property type="match status" value="1"/>
</dbReference>
<dbReference type="PANTHER" id="PTHR43378">
    <property type="entry name" value="UDP-3-O-ACYLGLUCOSAMINE N-ACYLTRANSFERASE"/>
    <property type="match status" value="1"/>
</dbReference>
<dbReference type="PANTHER" id="PTHR43378:SF2">
    <property type="entry name" value="UDP-3-O-ACYLGLUCOSAMINE N-ACYLTRANSFERASE 1, MITOCHONDRIAL-RELATED"/>
    <property type="match status" value="1"/>
</dbReference>
<dbReference type="Pfam" id="PF00132">
    <property type="entry name" value="Hexapep"/>
    <property type="match status" value="1"/>
</dbReference>
<dbReference type="Pfam" id="PF14602">
    <property type="entry name" value="Hexapep_2"/>
    <property type="match status" value="2"/>
</dbReference>
<dbReference type="Pfam" id="PF04613">
    <property type="entry name" value="LpxD"/>
    <property type="match status" value="1"/>
</dbReference>
<dbReference type="SUPFAM" id="SSF51161">
    <property type="entry name" value="Trimeric LpxA-like enzymes"/>
    <property type="match status" value="1"/>
</dbReference>
<dbReference type="PROSITE" id="PS00101">
    <property type="entry name" value="HEXAPEP_TRANSFERASES"/>
    <property type="match status" value="1"/>
</dbReference>
<sequence length="333" mass="34967">MSVRLRQIVEALGGTIEGGGGDVEILRIAPLESAEPGDLAFLSNPRYRQQLAASRAACVIVAPAMREEALARGACIVAEDPYAYFARATQLWKRLHGRTPAAGVHPSAVVDPDAFVDPSAHIGPLCVVERGARIGAGTVLTSRITVGEGCRIGERCLLHPGVVIGADGFGFAAEGGAWTKIEQLGAVRIGDDVEIGANTCIDRGALDDTVIEDGVKLDNLVQIGHNVHIGRHTAVAGCTGVSGSTRIGARCMIGGAAMILGHLEIADGVQVSPGTAITRSVLKPGLYSGMFPFDENAKWEKNAATLRQLHGLRARIMALEEQIRKDGPTAHIQ</sequence>
<comment type="function">
    <text evidence="1">Catalyzes the N-acylation of UDP-3-O-acylglucosamine using 3-hydroxyacyl-ACP as the acyl donor. Is involved in the biosynthesis of lipid A, a phosphorylated glycolipid that anchors the lipopolysaccharide to the outer membrane of the cell.</text>
</comment>
<comment type="catalytic activity">
    <reaction evidence="1">
        <text>a UDP-3-O-[(3R)-3-hydroxyacyl]-alpha-D-glucosamine + a (3R)-hydroxyacyl-[ACP] = a UDP-2-N,3-O-bis[(3R)-3-hydroxyacyl]-alpha-D-glucosamine + holo-[ACP] + H(+)</text>
        <dbReference type="Rhea" id="RHEA:53836"/>
        <dbReference type="Rhea" id="RHEA-COMP:9685"/>
        <dbReference type="Rhea" id="RHEA-COMP:9945"/>
        <dbReference type="ChEBI" id="CHEBI:15378"/>
        <dbReference type="ChEBI" id="CHEBI:64479"/>
        <dbReference type="ChEBI" id="CHEBI:78827"/>
        <dbReference type="ChEBI" id="CHEBI:137740"/>
        <dbReference type="ChEBI" id="CHEBI:137748"/>
        <dbReference type="EC" id="2.3.1.191"/>
    </reaction>
</comment>
<comment type="pathway">
    <text evidence="1">Bacterial outer membrane biogenesis; LPS lipid A biosynthesis.</text>
</comment>
<comment type="subunit">
    <text evidence="1">Homotrimer.</text>
</comment>
<comment type="similarity">
    <text evidence="1">Belongs to the transferase hexapeptide repeat family. LpxD subfamily.</text>
</comment>
<accession>A1TN79</accession>